<organism>
    <name type="scientific">Clostridium acetobutylicum (strain ATCC 824 / DSM 792 / JCM 1419 / IAM 19013 / LMG 5710 / NBRC 13948 / NRRL B-527 / VKM B-1787 / 2291 / W)</name>
    <dbReference type="NCBI Taxonomy" id="272562"/>
    <lineage>
        <taxon>Bacteria</taxon>
        <taxon>Bacillati</taxon>
        <taxon>Bacillota</taxon>
        <taxon>Clostridia</taxon>
        <taxon>Eubacteriales</taxon>
        <taxon>Clostridiaceae</taxon>
        <taxon>Clostridium</taxon>
    </lineage>
</organism>
<gene>
    <name evidence="1" type="primary">nfi</name>
    <name type="ordered locus">CA_C0363</name>
</gene>
<reference key="1">
    <citation type="journal article" date="2001" name="J. Bacteriol.">
        <title>Genome sequence and comparative analysis of the solvent-producing bacterium Clostridium acetobutylicum.</title>
        <authorList>
            <person name="Noelling J."/>
            <person name="Breton G."/>
            <person name="Omelchenko M.V."/>
            <person name="Makarova K.S."/>
            <person name="Zeng Q."/>
            <person name="Gibson R."/>
            <person name="Lee H.M."/>
            <person name="Dubois J."/>
            <person name="Qiu D."/>
            <person name="Hitti J."/>
            <person name="Wolf Y.I."/>
            <person name="Tatusov R.L."/>
            <person name="Sabathe F."/>
            <person name="Doucette-Stamm L.A."/>
            <person name="Soucaille P."/>
            <person name="Daly M.J."/>
            <person name="Bennett G.N."/>
            <person name="Koonin E.V."/>
            <person name="Smith D.R."/>
        </authorList>
    </citation>
    <scope>NUCLEOTIDE SEQUENCE [LARGE SCALE GENOMIC DNA]</scope>
    <source>
        <strain>ATCC 824 / DSM 792 / JCM 1419 / IAM 19013 / LMG 5710 / NBRC 13948 / NRRL B-527 / VKM B-1787 / 2291 / W</strain>
    </source>
</reference>
<evidence type="ECO:0000255" key="1">
    <source>
        <dbReference type="HAMAP-Rule" id="MF_00801"/>
    </source>
</evidence>
<feature type="chain" id="PRO_0000159659" description="Endonuclease V">
    <location>
        <begin position="1"/>
        <end position="234"/>
    </location>
</feature>
<feature type="binding site" evidence="1">
    <location>
        <position position="46"/>
    </location>
    <ligand>
        <name>Mg(2+)</name>
        <dbReference type="ChEBI" id="CHEBI:18420"/>
    </ligand>
</feature>
<feature type="binding site" evidence="1">
    <location>
        <position position="116"/>
    </location>
    <ligand>
        <name>Mg(2+)</name>
        <dbReference type="ChEBI" id="CHEBI:18420"/>
    </ligand>
</feature>
<feature type="site" description="Interaction with target DNA" evidence="1">
    <location>
        <position position="86"/>
    </location>
</feature>
<name>NFI_CLOAB</name>
<protein>
    <recommendedName>
        <fullName evidence="1">Endonuclease V</fullName>
        <ecNumber evidence="1">3.1.21.7</ecNumber>
    </recommendedName>
    <alternativeName>
        <fullName evidence="1">Deoxyinosine 3'endonuclease</fullName>
    </alternativeName>
    <alternativeName>
        <fullName evidence="1">Deoxyribonuclease V</fullName>
        <shortName evidence="1">DNase V</shortName>
    </alternativeName>
</protein>
<keyword id="KW-0963">Cytoplasm</keyword>
<keyword id="KW-0227">DNA damage</keyword>
<keyword id="KW-0234">DNA repair</keyword>
<keyword id="KW-0255">Endonuclease</keyword>
<keyword id="KW-0378">Hydrolase</keyword>
<keyword id="KW-0460">Magnesium</keyword>
<keyword id="KW-0479">Metal-binding</keyword>
<keyword id="KW-0540">Nuclease</keyword>
<keyword id="KW-1185">Reference proteome</keyword>
<proteinExistence type="inferred from homology"/>
<comment type="function">
    <text evidence="1">DNA repair enzyme involved in the repair of deaminated bases. Selectively cleaves double-stranded DNA at the second phosphodiester bond 3' to a deoxyinosine leaving behind the intact lesion on the nicked DNA.</text>
</comment>
<comment type="catalytic activity">
    <reaction evidence="1">
        <text>Endonucleolytic cleavage at apurinic or apyrimidinic sites to products with a 5'-phosphate.</text>
        <dbReference type="EC" id="3.1.21.7"/>
    </reaction>
</comment>
<comment type="cofactor">
    <cofactor evidence="1">
        <name>Mg(2+)</name>
        <dbReference type="ChEBI" id="CHEBI:18420"/>
    </cofactor>
</comment>
<comment type="subcellular location">
    <subcellularLocation>
        <location evidence="1">Cytoplasm</location>
    </subcellularLocation>
</comment>
<comment type="similarity">
    <text evidence="1">Belongs to the endonuclease V family.</text>
</comment>
<dbReference type="EC" id="3.1.21.7" evidence="1"/>
<dbReference type="EMBL" id="AE001437">
    <property type="protein sequence ID" value="AAK78343.1"/>
    <property type="molecule type" value="Genomic_DNA"/>
</dbReference>
<dbReference type="PIR" id="D96944">
    <property type="entry name" value="D96944"/>
</dbReference>
<dbReference type="RefSeq" id="NP_347003.1">
    <property type="nucleotide sequence ID" value="NC_003030.1"/>
</dbReference>
<dbReference type="RefSeq" id="WP_010963685.1">
    <property type="nucleotide sequence ID" value="NC_003030.1"/>
</dbReference>
<dbReference type="SMR" id="Q97M37"/>
<dbReference type="STRING" id="272562.CA_C0363"/>
<dbReference type="KEGG" id="cac:CA_C0363"/>
<dbReference type="PATRIC" id="fig|272562.8.peg.556"/>
<dbReference type="eggNOG" id="COG1515">
    <property type="taxonomic scope" value="Bacteria"/>
</dbReference>
<dbReference type="HOGENOM" id="CLU_047631_1_1_9"/>
<dbReference type="OrthoDB" id="9790916at2"/>
<dbReference type="Proteomes" id="UP000000814">
    <property type="component" value="Chromosome"/>
</dbReference>
<dbReference type="GO" id="GO:0005737">
    <property type="term" value="C:cytoplasm"/>
    <property type="evidence" value="ECO:0007669"/>
    <property type="project" value="UniProtKB-SubCell"/>
</dbReference>
<dbReference type="GO" id="GO:0043737">
    <property type="term" value="F:deoxyribonuclease V activity"/>
    <property type="evidence" value="ECO:0007669"/>
    <property type="project" value="UniProtKB-UniRule"/>
</dbReference>
<dbReference type="GO" id="GO:0000287">
    <property type="term" value="F:magnesium ion binding"/>
    <property type="evidence" value="ECO:0007669"/>
    <property type="project" value="UniProtKB-UniRule"/>
</dbReference>
<dbReference type="GO" id="GO:0016891">
    <property type="term" value="F:RNA endonuclease activity, producing 5'-phosphomonoesters"/>
    <property type="evidence" value="ECO:0007669"/>
    <property type="project" value="TreeGrafter"/>
</dbReference>
<dbReference type="GO" id="GO:0003727">
    <property type="term" value="F:single-stranded RNA binding"/>
    <property type="evidence" value="ECO:0007669"/>
    <property type="project" value="TreeGrafter"/>
</dbReference>
<dbReference type="GO" id="GO:0006281">
    <property type="term" value="P:DNA repair"/>
    <property type="evidence" value="ECO:0007669"/>
    <property type="project" value="UniProtKB-UniRule"/>
</dbReference>
<dbReference type="CDD" id="cd06559">
    <property type="entry name" value="Endonuclease_V"/>
    <property type="match status" value="1"/>
</dbReference>
<dbReference type="Gene3D" id="3.30.2170.10">
    <property type="entry name" value="archaeoglobus fulgidus dsm 4304 superfamily"/>
    <property type="match status" value="1"/>
</dbReference>
<dbReference type="HAMAP" id="MF_00801">
    <property type="entry name" value="Endonuclease_5"/>
    <property type="match status" value="1"/>
</dbReference>
<dbReference type="InterPro" id="IPR007581">
    <property type="entry name" value="Endonuclease-V"/>
</dbReference>
<dbReference type="PANTHER" id="PTHR28511">
    <property type="entry name" value="ENDONUCLEASE V"/>
    <property type="match status" value="1"/>
</dbReference>
<dbReference type="PANTHER" id="PTHR28511:SF1">
    <property type="entry name" value="ENDONUCLEASE V"/>
    <property type="match status" value="1"/>
</dbReference>
<dbReference type="Pfam" id="PF04493">
    <property type="entry name" value="Endonuclease_5"/>
    <property type="match status" value="1"/>
</dbReference>
<accession>Q97M37</accession>
<sequence>MKTVNVHGFEASSKEEFQVIQSSLVKRIKLISDFKEEDIKLCAGVDLAYWTKGEKQYGVCCIIVIDYNTGEIIEKAYDYGEIEVPYMPGFLAFRELPLVIKTVKKLKNEPDIFMFDGNGYLHYNHMGIATHASFFLNKPTIGVAKSYLKVAGVDFEMPESFEGAFKDIVINEEVYGRVLRTKKDVKPIFVSCGNYIDLETCTKICSKLINNDSRLPITVRLADLETHKRRSELS</sequence>